<gene>
    <name evidence="1" type="primary">tolB</name>
    <name type="ordered locus">PC1_1249</name>
</gene>
<proteinExistence type="inferred from homology"/>
<dbReference type="EMBL" id="CP001657">
    <property type="protein sequence ID" value="ACT12297.1"/>
    <property type="molecule type" value="Genomic_DNA"/>
</dbReference>
<dbReference type="RefSeq" id="WP_015839527.1">
    <property type="nucleotide sequence ID" value="NC_012917.1"/>
</dbReference>
<dbReference type="SMR" id="C6DCE7"/>
<dbReference type="STRING" id="561230.PC1_1249"/>
<dbReference type="GeneID" id="67794979"/>
<dbReference type="KEGG" id="pct:PC1_1249"/>
<dbReference type="eggNOG" id="COG0823">
    <property type="taxonomic scope" value="Bacteria"/>
</dbReference>
<dbReference type="HOGENOM" id="CLU_047123_0_0_6"/>
<dbReference type="OrthoDB" id="9802240at2"/>
<dbReference type="Proteomes" id="UP000002736">
    <property type="component" value="Chromosome"/>
</dbReference>
<dbReference type="GO" id="GO:0042597">
    <property type="term" value="C:periplasmic space"/>
    <property type="evidence" value="ECO:0007669"/>
    <property type="project" value="UniProtKB-SubCell"/>
</dbReference>
<dbReference type="GO" id="GO:0051301">
    <property type="term" value="P:cell division"/>
    <property type="evidence" value="ECO:0007669"/>
    <property type="project" value="UniProtKB-UniRule"/>
</dbReference>
<dbReference type="GO" id="GO:0017038">
    <property type="term" value="P:protein import"/>
    <property type="evidence" value="ECO:0007669"/>
    <property type="project" value="InterPro"/>
</dbReference>
<dbReference type="FunFam" id="2.120.10.30:FF:000022">
    <property type="entry name" value="Tol-Pal system protein TolB"/>
    <property type="match status" value="1"/>
</dbReference>
<dbReference type="Gene3D" id="2.120.10.30">
    <property type="entry name" value="TolB, C-terminal domain"/>
    <property type="match status" value="1"/>
</dbReference>
<dbReference type="Gene3D" id="3.40.50.10070">
    <property type="entry name" value="TolB, N-terminal domain"/>
    <property type="match status" value="1"/>
</dbReference>
<dbReference type="HAMAP" id="MF_00671">
    <property type="entry name" value="TolB"/>
    <property type="match status" value="1"/>
</dbReference>
<dbReference type="InterPro" id="IPR011042">
    <property type="entry name" value="6-blade_b-propeller_TolB-like"/>
</dbReference>
<dbReference type="InterPro" id="IPR011659">
    <property type="entry name" value="PD40"/>
</dbReference>
<dbReference type="InterPro" id="IPR014167">
    <property type="entry name" value="Tol-Pal_TolB"/>
</dbReference>
<dbReference type="InterPro" id="IPR007195">
    <property type="entry name" value="TolB_N"/>
</dbReference>
<dbReference type="NCBIfam" id="TIGR02800">
    <property type="entry name" value="propeller_TolB"/>
    <property type="match status" value="1"/>
</dbReference>
<dbReference type="PANTHER" id="PTHR36842:SF1">
    <property type="entry name" value="PROTEIN TOLB"/>
    <property type="match status" value="1"/>
</dbReference>
<dbReference type="PANTHER" id="PTHR36842">
    <property type="entry name" value="PROTEIN TOLB HOMOLOG"/>
    <property type="match status" value="1"/>
</dbReference>
<dbReference type="Pfam" id="PF07676">
    <property type="entry name" value="PD40"/>
    <property type="match status" value="4"/>
</dbReference>
<dbReference type="Pfam" id="PF04052">
    <property type="entry name" value="TolB_N"/>
    <property type="match status" value="1"/>
</dbReference>
<dbReference type="SUPFAM" id="SSF52964">
    <property type="entry name" value="TolB, N-terminal domain"/>
    <property type="match status" value="1"/>
</dbReference>
<dbReference type="SUPFAM" id="SSF69304">
    <property type="entry name" value="Tricorn protease N-terminal domain"/>
    <property type="match status" value="1"/>
</dbReference>
<name>TOLB_PECCP</name>
<evidence type="ECO:0000255" key="1">
    <source>
        <dbReference type="HAMAP-Rule" id="MF_00671"/>
    </source>
</evidence>
<accession>C6DCE7</accession>
<sequence length="430" mass="45849">MKHVLKVAVSFLMLWAAVLHAEVRIEITQGVDSARPIGVVPFKWAGPGAAPEDVGGIVGADLRNSGKFNPIDANRMPQQPATASEVTPAAWTALGIDAVVVGQVQPSADGSYLVSYQLVDTSGNPGNVLAQNQFKVTKQWLRYAAHTASDEVFEKLSGIKGAFRTRIAYVVQTNGGQFPYELRVADYDGYNQFVVHRSPQPLMSPAWSADGSKLAYVTFESGRSALVIQTLANGAIRQVASFPRHNGAPSFSPDGSKLAFALSKSGSLNLYVMNLASGQISQVTDGRSNNTEPTWFPDSQTLAYTSDQAGRPQVYKVNANGGAPQRLTWEGAQNQDADVSADGKFLVTVGSNGGAQHISKLDLVTGAVQVLTDTFLDETPSIAPNGTMVIYSSKQGLGSVLQLVSTDGRFKARLPATDGQVKFPAWSPYL</sequence>
<organism>
    <name type="scientific">Pectobacterium carotovorum subsp. carotovorum (strain PC1)</name>
    <dbReference type="NCBI Taxonomy" id="561230"/>
    <lineage>
        <taxon>Bacteria</taxon>
        <taxon>Pseudomonadati</taxon>
        <taxon>Pseudomonadota</taxon>
        <taxon>Gammaproteobacteria</taxon>
        <taxon>Enterobacterales</taxon>
        <taxon>Pectobacteriaceae</taxon>
        <taxon>Pectobacterium</taxon>
    </lineage>
</organism>
<keyword id="KW-0131">Cell cycle</keyword>
<keyword id="KW-0132">Cell division</keyword>
<keyword id="KW-0574">Periplasm</keyword>
<keyword id="KW-0732">Signal</keyword>
<reference key="1">
    <citation type="submission" date="2009-07" db="EMBL/GenBank/DDBJ databases">
        <title>Complete sequence of Pectobacterium carotovorum subsp. carotovorum PC1.</title>
        <authorList>
            <consortium name="US DOE Joint Genome Institute"/>
            <person name="Lucas S."/>
            <person name="Copeland A."/>
            <person name="Lapidus A."/>
            <person name="Glavina del Rio T."/>
            <person name="Tice H."/>
            <person name="Bruce D."/>
            <person name="Goodwin L."/>
            <person name="Pitluck S."/>
            <person name="Munk A.C."/>
            <person name="Brettin T."/>
            <person name="Detter J.C."/>
            <person name="Han C."/>
            <person name="Tapia R."/>
            <person name="Larimer F."/>
            <person name="Land M."/>
            <person name="Hauser L."/>
            <person name="Kyrpides N."/>
            <person name="Mikhailova N."/>
            <person name="Balakrishnan V."/>
            <person name="Glasner J."/>
            <person name="Perna N.T."/>
        </authorList>
    </citation>
    <scope>NUCLEOTIDE SEQUENCE [LARGE SCALE GENOMIC DNA]</scope>
    <source>
        <strain>PC1</strain>
    </source>
</reference>
<comment type="function">
    <text evidence="1">Part of the Tol-Pal system, which plays a role in outer membrane invagination during cell division and is important for maintaining outer membrane integrity. TolB occupies a key intermediary position in the Tol-Pal system because it communicates directly with both membrane-embedded components, Pal in the outer membrane and TolA in the inner membrane.</text>
</comment>
<comment type="subunit">
    <text evidence="1">The Tol-Pal system is composed of five core proteins: the inner membrane proteins TolA, TolQ and TolR, the periplasmic protein TolB and the outer membrane protein Pal. They form a network linking the inner and outer membranes and the peptidoglycan layer.</text>
</comment>
<comment type="subcellular location">
    <subcellularLocation>
        <location evidence="1">Periplasm</location>
    </subcellularLocation>
</comment>
<comment type="similarity">
    <text evidence="1">Belongs to the TolB family.</text>
</comment>
<feature type="signal peptide" evidence="1">
    <location>
        <begin position="1"/>
        <end position="21"/>
    </location>
</feature>
<feature type="chain" id="PRO_5000485918" description="Tol-Pal system protein TolB" evidence="1">
    <location>
        <begin position="22"/>
        <end position="430"/>
    </location>
</feature>
<protein>
    <recommendedName>
        <fullName evidence="1">Tol-Pal system protein TolB</fullName>
    </recommendedName>
</protein>